<reference key="1">
    <citation type="journal article" date="2006" name="BMC Genomics">
        <title>Complete plastid genome sequence of Daucus carota: implications for biotechnology and phylogeny of angiosperms.</title>
        <authorList>
            <person name="Ruhlman T."/>
            <person name="Lee S.-B."/>
            <person name="Jansen R.K."/>
            <person name="Hostetler J.B."/>
            <person name="Tallon L.J."/>
            <person name="Town C.D."/>
            <person name="Daniell H."/>
        </authorList>
    </citation>
    <scope>NUCLEOTIDE SEQUENCE [LARGE SCALE GENOMIC DNA]</scope>
    <source>
        <strain>cv. Danvers Half-long</strain>
    </source>
</reference>
<gene>
    <name evidence="1" type="primary">rpl16</name>
</gene>
<evidence type="ECO:0000255" key="1">
    <source>
        <dbReference type="HAMAP-Rule" id="MF_01342"/>
    </source>
</evidence>
<evidence type="ECO:0000305" key="2"/>
<organism>
    <name type="scientific">Daucus carota</name>
    <name type="common">Wild carrot</name>
    <dbReference type="NCBI Taxonomy" id="4039"/>
    <lineage>
        <taxon>Eukaryota</taxon>
        <taxon>Viridiplantae</taxon>
        <taxon>Streptophyta</taxon>
        <taxon>Embryophyta</taxon>
        <taxon>Tracheophyta</taxon>
        <taxon>Spermatophyta</taxon>
        <taxon>Magnoliopsida</taxon>
        <taxon>eudicotyledons</taxon>
        <taxon>Gunneridae</taxon>
        <taxon>Pentapetalae</taxon>
        <taxon>asterids</taxon>
        <taxon>campanulids</taxon>
        <taxon>Apiales</taxon>
        <taxon>Apiaceae</taxon>
        <taxon>Apioideae</taxon>
        <taxon>Scandiceae</taxon>
        <taxon>Daucinae</taxon>
        <taxon>Daucus</taxon>
        <taxon>Daucus sect. Daucus</taxon>
    </lineage>
</organism>
<proteinExistence type="inferred from homology"/>
<geneLocation type="chloroplast"/>
<sequence length="135" mass="15299">MLSPKRTRFRKQHRGRMKGISYRGNHISFGKYALQALEPAWITSRQIEAGRRAMTRNARRGGKIWVRIFPDKPVTVRPAETRMGSGKGSPEYWVAVVKPGRILYEMGGVTENIARRAISIASSKMPIRTQFIISG</sequence>
<keyword id="KW-0150">Chloroplast</keyword>
<keyword id="KW-0934">Plastid</keyword>
<keyword id="KW-0687">Ribonucleoprotein</keyword>
<keyword id="KW-0689">Ribosomal protein</keyword>
<protein>
    <recommendedName>
        <fullName evidence="1">Large ribosomal subunit protein uL16c</fullName>
    </recommendedName>
    <alternativeName>
        <fullName evidence="2">50S ribosomal protein L16, chloroplastic</fullName>
    </alternativeName>
</protein>
<name>RK16_DAUCA</name>
<dbReference type="EMBL" id="DQ898156">
    <property type="protein sequence ID" value="ABI32461.1"/>
    <property type="molecule type" value="Genomic_DNA"/>
</dbReference>
<dbReference type="RefSeq" id="YP_740155.1">
    <property type="nucleotide sequence ID" value="NC_008325.1"/>
</dbReference>
<dbReference type="SMR" id="Q0G9S4"/>
<dbReference type="GeneID" id="4266782"/>
<dbReference type="OMA" id="KGAVEYW"/>
<dbReference type="GO" id="GO:0009507">
    <property type="term" value="C:chloroplast"/>
    <property type="evidence" value="ECO:0007669"/>
    <property type="project" value="UniProtKB-SubCell"/>
</dbReference>
<dbReference type="GO" id="GO:0005762">
    <property type="term" value="C:mitochondrial large ribosomal subunit"/>
    <property type="evidence" value="ECO:0007669"/>
    <property type="project" value="TreeGrafter"/>
</dbReference>
<dbReference type="GO" id="GO:0019843">
    <property type="term" value="F:rRNA binding"/>
    <property type="evidence" value="ECO:0007669"/>
    <property type="project" value="InterPro"/>
</dbReference>
<dbReference type="GO" id="GO:0003735">
    <property type="term" value="F:structural constituent of ribosome"/>
    <property type="evidence" value="ECO:0007669"/>
    <property type="project" value="InterPro"/>
</dbReference>
<dbReference type="GO" id="GO:0032543">
    <property type="term" value="P:mitochondrial translation"/>
    <property type="evidence" value="ECO:0007669"/>
    <property type="project" value="TreeGrafter"/>
</dbReference>
<dbReference type="CDD" id="cd01433">
    <property type="entry name" value="Ribosomal_L16_L10e"/>
    <property type="match status" value="1"/>
</dbReference>
<dbReference type="FunFam" id="3.90.1170.10:FF:000001">
    <property type="entry name" value="50S ribosomal protein L16"/>
    <property type="match status" value="1"/>
</dbReference>
<dbReference type="Gene3D" id="3.90.1170.10">
    <property type="entry name" value="Ribosomal protein L10e/L16"/>
    <property type="match status" value="1"/>
</dbReference>
<dbReference type="HAMAP" id="MF_01342">
    <property type="entry name" value="Ribosomal_uL16"/>
    <property type="match status" value="1"/>
</dbReference>
<dbReference type="InterPro" id="IPR047873">
    <property type="entry name" value="Ribosomal_uL16"/>
</dbReference>
<dbReference type="InterPro" id="IPR000114">
    <property type="entry name" value="Ribosomal_uL16_bact-type"/>
</dbReference>
<dbReference type="InterPro" id="IPR020798">
    <property type="entry name" value="Ribosomal_uL16_CS"/>
</dbReference>
<dbReference type="InterPro" id="IPR016180">
    <property type="entry name" value="Ribosomal_uL16_dom"/>
</dbReference>
<dbReference type="InterPro" id="IPR036920">
    <property type="entry name" value="Ribosomal_uL16_sf"/>
</dbReference>
<dbReference type="NCBIfam" id="TIGR01164">
    <property type="entry name" value="rplP_bact"/>
    <property type="match status" value="1"/>
</dbReference>
<dbReference type="PANTHER" id="PTHR12220">
    <property type="entry name" value="50S/60S RIBOSOMAL PROTEIN L16"/>
    <property type="match status" value="1"/>
</dbReference>
<dbReference type="PANTHER" id="PTHR12220:SF13">
    <property type="entry name" value="LARGE RIBOSOMAL SUBUNIT PROTEIN UL16M"/>
    <property type="match status" value="1"/>
</dbReference>
<dbReference type="Pfam" id="PF00252">
    <property type="entry name" value="Ribosomal_L16"/>
    <property type="match status" value="1"/>
</dbReference>
<dbReference type="PRINTS" id="PR00060">
    <property type="entry name" value="RIBOSOMALL16"/>
</dbReference>
<dbReference type="SUPFAM" id="SSF54686">
    <property type="entry name" value="Ribosomal protein L16p/L10e"/>
    <property type="match status" value="1"/>
</dbReference>
<dbReference type="PROSITE" id="PS00586">
    <property type="entry name" value="RIBOSOMAL_L16_1"/>
    <property type="match status" value="1"/>
</dbReference>
<dbReference type="PROSITE" id="PS00701">
    <property type="entry name" value="RIBOSOMAL_L16_2"/>
    <property type="match status" value="1"/>
</dbReference>
<comment type="subunit">
    <text evidence="1">Part of the 50S ribosomal subunit.</text>
</comment>
<comment type="subcellular location">
    <subcellularLocation>
        <location>Plastid</location>
        <location>Chloroplast</location>
    </subcellularLocation>
</comment>
<comment type="similarity">
    <text evidence="1">Belongs to the universal ribosomal protein uL16 family.</text>
</comment>
<accession>Q0G9S4</accession>
<feature type="chain" id="PRO_0000276381" description="Large ribosomal subunit protein uL16c">
    <location>
        <begin position="1"/>
        <end position="135"/>
    </location>
</feature>